<protein>
    <recommendedName>
        <fullName evidence="1">Ribonuclease Y</fullName>
        <shortName evidence="1">RNase Y</shortName>
        <ecNumber evidence="1">3.1.-.-</ecNumber>
    </recommendedName>
</protein>
<name>RNY_CLOBM</name>
<dbReference type="EC" id="3.1.-.-" evidence="1"/>
<dbReference type="EMBL" id="CP000962">
    <property type="protein sequence ID" value="ACA54175.1"/>
    <property type="molecule type" value="Genomic_DNA"/>
</dbReference>
<dbReference type="RefSeq" id="WP_004440657.1">
    <property type="nucleotide sequence ID" value="NC_010520.1"/>
</dbReference>
<dbReference type="SMR" id="B1KWJ2"/>
<dbReference type="KEGG" id="cbl:CLK_1779"/>
<dbReference type="HOGENOM" id="CLU_028328_1_0_9"/>
<dbReference type="GO" id="GO:0005886">
    <property type="term" value="C:plasma membrane"/>
    <property type="evidence" value="ECO:0007669"/>
    <property type="project" value="UniProtKB-SubCell"/>
</dbReference>
<dbReference type="GO" id="GO:0003723">
    <property type="term" value="F:RNA binding"/>
    <property type="evidence" value="ECO:0007669"/>
    <property type="project" value="UniProtKB-UniRule"/>
</dbReference>
<dbReference type="GO" id="GO:0004521">
    <property type="term" value="F:RNA endonuclease activity"/>
    <property type="evidence" value="ECO:0007669"/>
    <property type="project" value="UniProtKB-UniRule"/>
</dbReference>
<dbReference type="GO" id="GO:0006402">
    <property type="term" value="P:mRNA catabolic process"/>
    <property type="evidence" value="ECO:0007669"/>
    <property type="project" value="UniProtKB-UniRule"/>
</dbReference>
<dbReference type="CDD" id="cd00077">
    <property type="entry name" value="HDc"/>
    <property type="match status" value="1"/>
</dbReference>
<dbReference type="CDD" id="cd22431">
    <property type="entry name" value="KH-I_RNaseY"/>
    <property type="match status" value="1"/>
</dbReference>
<dbReference type="FunFam" id="1.10.3210.10:FF:000003">
    <property type="entry name" value="Ribonuclease Y"/>
    <property type="match status" value="1"/>
</dbReference>
<dbReference type="FunFam" id="3.30.1370.10:FF:000006">
    <property type="entry name" value="Ribonuclease Y"/>
    <property type="match status" value="1"/>
</dbReference>
<dbReference type="Gene3D" id="1.10.3210.10">
    <property type="entry name" value="Hypothetical protein af1432"/>
    <property type="match status" value="1"/>
</dbReference>
<dbReference type="Gene3D" id="3.30.1370.10">
    <property type="entry name" value="K Homology domain, type 1"/>
    <property type="match status" value="1"/>
</dbReference>
<dbReference type="HAMAP" id="MF_00335">
    <property type="entry name" value="RNase_Y"/>
    <property type="match status" value="1"/>
</dbReference>
<dbReference type="InterPro" id="IPR003607">
    <property type="entry name" value="HD/PDEase_dom"/>
</dbReference>
<dbReference type="InterPro" id="IPR006674">
    <property type="entry name" value="HD_domain"/>
</dbReference>
<dbReference type="InterPro" id="IPR006675">
    <property type="entry name" value="HDIG_dom"/>
</dbReference>
<dbReference type="InterPro" id="IPR004087">
    <property type="entry name" value="KH_dom"/>
</dbReference>
<dbReference type="InterPro" id="IPR004088">
    <property type="entry name" value="KH_dom_type_1"/>
</dbReference>
<dbReference type="InterPro" id="IPR036612">
    <property type="entry name" value="KH_dom_type_1_sf"/>
</dbReference>
<dbReference type="InterPro" id="IPR017705">
    <property type="entry name" value="Ribonuclease_Y"/>
</dbReference>
<dbReference type="InterPro" id="IPR022711">
    <property type="entry name" value="RNase_Y_N"/>
</dbReference>
<dbReference type="NCBIfam" id="TIGR00277">
    <property type="entry name" value="HDIG"/>
    <property type="match status" value="1"/>
</dbReference>
<dbReference type="NCBIfam" id="TIGR03319">
    <property type="entry name" value="RNase_Y"/>
    <property type="match status" value="1"/>
</dbReference>
<dbReference type="PANTHER" id="PTHR12826">
    <property type="entry name" value="RIBONUCLEASE Y"/>
    <property type="match status" value="1"/>
</dbReference>
<dbReference type="PANTHER" id="PTHR12826:SF15">
    <property type="entry name" value="RIBONUCLEASE Y"/>
    <property type="match status" value="1"/>
</dbReference>
<dbReference type="Pfam" id="PF01966">
    <property type="entry name" value="HD"/>
    <property type="match status" value="1"/>
</dbReference>
<dbReference type="Pfam" id="PF00013">
    <property type="entry name" value="KH_1"/>
    <property type="match status" value="1"/>
</dbReference>
<dbReference type="Pfam" id="PF12072">
    <property type="entry name" value="RNase_Y_N"/>
    <property type="match status" value="1"/>
</dbReference>
<dbReference type="SMART" id="SM00471">
    <property type="entry name" value="HDc"/>
    <property type="match status" value="1"/>
</dbReference>
<dbReference type="SMART" id="SM00322">
    <property type="entry name" value="KH"/>
    <property type="match status" value="1"/>
</dbReference>
<dbReference type="SUPFAM" id="SSF54791">
    <property type="entry name" value="Eukaryotic type KH-domain (KH-domain type I)"/>
    <property type="match status" value="1"/>
</dbReference>
<dbReference type="SUPFAM" id="SSF109604">
    <property type="entry name" value="HD-domain/PDEase-like"/>
    <property type="match status" value="1"/>
</dbReference>
<dbReference type="PROSITE" id="PS51831">
    <property type="entry name" value="HD"/>
    <property type="match status" value="1"/>
</dbReference>
<dbReference type="PROSITE" id="PS50084">
    <property type="entry name" value="KH_TYPE_1"/>
    <property type="match status" value="1"/>
</dbReference>
<comment type="function">
    <text evidence="1">Endoribonuclease that initiates mRNA decay.</text>
</comment>
<comment type="subcellular location">
    <subcellularLocation>
        <location evidence="1">Cell membrane</location>
        <topology evidence="1">Single-pass membrane protein</topology>
    </subcellularLocation>
</comment>
<comment type="similarity">
    <text evidence="1">Belongs to the RNase Y family.</text>
</comment>
<sequence length="513" mass="58099">MGPTKYIIIAVVIIIICVILGLYVVDKKAKEKLSEASKEARRLKEEAERDAEAKKKEAILEAKEEAHKLRAEVERENRERRNEVQRLERRIIQKEEALDKKSEALENKEEALNKKQQKIEDVETHMEELHEKQRTELERISGLTTEQAKEFLLEQVRKEVKHETAVMIKEIETKAKEEADKRAREVITYAIQRCAADHVAETTVHVVNLPNDEMKGRIIGREGRNIRTLETLTGVDLIIDDTPEAVILSGFDPIRREVARIALEKLIVDGRIHPARIEEMVEKAKKEVEISIKEEGEQATFETGIHGLHIELIRLLGRLKYRTSYGQNVLKHSIEVSHLAGLMASELGIDPTLAKRVGLLHDIGKAVDHEVEGPHAIIGSEIAKKYRESALVVNAIGAHHGDMEPQSLEAILVQAADAISAARPGARRETLEAYIKRLEKLEEIANECEGVEKSYAIQAGREIRIMVKPEVLDDTGCIEMARNIVKQIESELEYPGQIKVNVIRETRAIEYAK</sequence>
<proteinExistence type="inferred from homology"/>
<organism>
    <name type="scientific">Clostridium botulinum (strain Loch Maree / Type A3)</name>
    <dbReference type="NCBI Taxonomy" id="498214"/>
    <lineage>
        <taxon>Bacteria</taxon>
        <taxon>Bacillati</taxon>
        <taxon>Bacillota</taxon>
        <taxon>Clostridia</taxon>
        <taxon>Eubacteriales</taxon>
        <taxon>Clostridiaceae</taxon>
        <taxon>Clostridium</taxon>
    </lineage>
</organism>
<gene>
    <name evidence="1" type="primary">rny</name>
    <name type="ordered locus">CLK_1779</name>
</gene>
<keyword id="KW-1003">Cell membrane</keyword>
<keyword id="KW-0255">Endonuclease</keyword>
<keyword id="KW-0378">Hydrolase</keyword>
<keyword id="KW-0472">Membrane</keyword>
<keyword id="KW-0540">Nuclease</keyword>
<keyword id="KW-0694">RNA-binding</keyword>
<keyword id="KW-0812">Transmembrane</keyword>
<keyword id="KW-1133">Transmembrane helix</keyword>
<evidence type="ECO:0000255" key="1">
    <source>
        <dbReference type="HAMAP-Rule" id="MF_00335"/>
    </source>
</evidence>
<evidence type="ECO:0000255" key="2">
    <source>
        <dbReference type="PROSITE-ProRule" id="PRU01175"/>
    </source>
</evidence>
<reference key="1">
    <citation type="journal article" date="2007" name="PLoS ONE">
        <title>Analysis of the neurotoxin complex genes in Clostridium botulinum A1-A4 and B1 strains: BoNT/A3, /Ba4 and /B1 clusters are located within plasmids.</title>
        <authorList>
            <person name="Smith T.J."/>
            <person name="Hill K.K."/>
            <person name="Foley B.T."/>
            <person name="Detter J.C."/>
            <person name="Munk A.C."/>
            <person name="Bruce D.C."/>
            <person name="Doggett N.A."/>
            <person name="Smith L.A."/>
            <person name="Marks J.D."/>
            <person name="Xie G."/>
            <person name="Brettin T.S."/>
        </authorList>
    </citation>
    <scope>NUCLEOTIDE SEQUENCE [LARGE SCALE GENOMIC DNA]</scope>
    <source>
        <strain>Loch Maree / Type A3</strain>
    </source>
</reference>
<feature type="chain" id="PRO_0000344848" description="Ribonuclease Y">
    <location>
        <begin position="1"/>
        <end position="513"/>
    </location>
</feature>
<feature type="transmembrane region" description="Helical" evidence="1">
    <location>
        <begin position="6"/>
        <end position="26"/>
    </location>
</feature>
<feature type="domain" description="KH" evidence="1">
    <location>
        <begin position="203"/>
        <end position="288"/>
    </location>
</feature>
<feature type="domain" description="HD" evidence="2">
    <location>
        <begin position="329"/>
        <end position="422"/>
    </location>
</feature>
<accession>B1KWJ2</accession>